<gene>
    <name type="primary">LAX3</name>
    <name type="ordered locus">At1g77690</name>
    <name type="ORF">T32E8.2</name>
</gene>
<reference key="1">
    <citation type="journal article" date="2001" name="J. Plant Growth Regul.">
        <title>Quick on the uptake: characterization of a family of plant auxin influx carriers.</title>
        <authorList>
            <person name="Parry P.G."/>
            <person name="Marchant A."/>
            <person name="May S.T."/>
            <person name="Swarup R."/>
            <person name="Swarup K."/>
            <person name="James N."/>
            <person name="Graham N."/>
            <person name="Allen T."/>
            <person name="Martucci T."/>
            <person name="Yemm A."/>
            <person name="Napier R."/>
            <person name="Manning K."/>
            <person name="King G."/>
            <person name="Bennett M.J."/>
        </authorList>
    </citation>
    <scope>NUCLEOTIDE SEQUENCE [GENOMIC DNA]</scope>
    <scope>GENE FAMILY</scope>
    <scope>NOMENCLATURE</scope>
</reference>
<reference key="2">
    <citation type="journal article" date="2000" name="Nature">
        <title>Sequence and analysis of chromosome 1 of the plant Arabidopsis thaliana.</title>
        <authorList>
            <person name="Theologis A."/>
            <person name="Ecker J.R."/>
            <person name="Palm C.J."/>
            <person name="Federspiel N.A."/>
            <person name="Kaul S."/>
            <person name="White O."/>
            <person name="Alonso J."/>
            <person name="Altafi H."/>
            <person name="Araujo R."/>
            <person name="Bowman C.L."/>
            <person name="Brooks S.Y."/>
            <person name="Buehler E."/>
            <person name="Chan A."/>
            <person name="Chao Q."/>
            <person name="Chen H."/>
            <person name="Cheuk R.F."/>
            <person name="Chin C.W."/>
            <person name="Chung M.K."/>
            <person name="Conn L."/>
            <person name="Conway A.B."/>
            <person name="Conway A.R."/>
            <person name="Creasy T.H."/>
            <person name="Dewar K."/>
            <person name="Dunn P."/>
            <person name="Etgu P."/>
            <person name="Feldblyum T.V."/>
            <person name="Feng J.-D."/>
            <person name="Fong B."/>
            <person name="Fujii C.Y."/>
            <person name="Gill J.E."/>
            <person name="Goldsmith A.D."/>
            <person name="Haas B."/>
            <person name="Hansen N.F."/>
            <person name="Hughes B."/>
            <person name="Huizar L."/>
            <person name="Hunter J.L."/>
            <person name="Jenkins J."/>
            <person name="Johnson-Hopson C."/>
            <person name="Khan S."/>
            <person name="Khaykin E."/>
            <person name="Kim C.J."/>
            <person name="Koo H.L."/>
            <person name="Kremenetskaia I."/>
            <person name="Kurtz D.B."/>
            <person name="Kwan A."/>
            <person name="Lam B."/>
            <person name="Langin-Hooper S."/>
            <person name="Lee A."/>
            <person name="Lee J.M."/>
            <person name="Lenz C.A."/>
            <person name="Li J.H."/>
            <person name="Li Y.-P."/>
            <person name="Lin X."/>
            <person name="Liu S.X."/>
            <person name="Liu Z.A."/>
            <person name="Luros J.S."/>
            <person name="Maiti R."/>
            <person name="Marziali A."/>
            <person name="Militscher J."/>
            <person name="Miranda M."/>
            <person name="Nguyen M."/>
            <person name="Nierman W.C."/>
            <person name="Osborne B.I."/>
            <person name="Pai G."/>
            <person name="Peterson J."/>
            <person name="Pham P.K."/>
            <person name="Rizzo M."/>
            <person name="Rooney T."/>
            <person name="Rowley D."/>
            <person name="Sakano H."/>
            <person name="Salzberg S.L."/>
            <person name="Schwartz J.R."/>
            <person name="Shinn P."/>
            <person name="Southwick A.M."/>
            <person name="Sun H."/>
            <person name="Tallon L.J."/>
            <person name="Tambunga G."/>
            <person name="Toriumi M.J."/>
            <person name="Town C.D."/>
            <person name="Utterback T."/>
            <person name="Van Aken S."/>
            <person name="Vaysberg M."/>
            <person name="Vysotskaia V.S."/>
            <person name="Walker M."/>
            <person name="Wu D."/>
            <person name="Yu G."/>
            <person name="Fraser C.M."/>
            <person name="Venter J.C."/>
            <person name="Davis R.W."/>
        </authorList>
    </citation>
    <scope>NUCLEOTIDE SEQUENCE [LARGE SCALE GENOMIC DNA]</scope>
    <source>
        <strain>cv. Columbia</strain>
    </source>
</reference>
<reference key="3">
    <citation type="journal article" date="2017" name="Plant J.">
        <title>Araport11: a complete reannotation of the Arabidopsis thaliana reference genome.</title>
        <authorList>
            <person name="Cheng C.Y."/>
            <person name="Krishnakumar V."/>
            <person name="Chan A.P."/>
            <person name="Thibaud-Nissen F."/>
            <person name="Schobel S."/>
            <person name="Town C.D."/>
        </authorList>
    </citation>
    <scope>GENOME REANNOTATION</scope>
    <source>
        <strain>cv. Columbia</strain>
    </source>
</reference>
<reference key="4">
    <citation type="journal article" date="2003" name="Science">
        <title>Empirical analysis of transcriptional activity in the Arabidopsis genome.</title>
        <authorList>
            <person name="Yamada K."/>
            <person name="Lim J."/>
            <person name="Dale J.M."/>
            <person name="Chen H."/>
            <person name="Shinn P."/>
            <person name="Palm C.J."/>
            <person name="Southwick A.M."/>
            <person name="Wu H.C."/>
            <person name="Kim C.J."/>
            <person name="Nguyen M."/>
            <person name="Pham P.K."/>
            <person name="Cheuk R.F."/>
            <person name="Karlin-Newmann G."/>
            <person name="Liu S.X."/>
            <person name="Lam B."/>
            <person name="Sakano H."/>
            <person name="Wu T."/>
            <person name="Yu G."/>
            <person name="Miranda M."/>
            <person name="Quach H.L."/>
            <person name="Tripp M."/>
            <person name="Chang C.H."/>
            <person name="Lee J.M."/>
            <person name="Toriumi M.J."/>
            <person name="Chan M.M."/>
            <person name="Tang C.C."/>
            <person name="Onodera C.S."/>
            <person name="Deng J.M."/>
            <person name="Akiyama K."/>
            <person name="Ansari Y."/>
            <person name="Arakawa T."/>
            <person name="Banh J."/>
            <person name="Banno F."/>
            <person name="Bowser L."/>
            <person name="Brooks S.Y."/>
            <person name="Carninci P."/>
            <person name="Chao Q."/>
            <person name="Choy N."/>
            <person name="Enju A."/>
            <person name="Goldsmith A.D."/>
            <person name="Gurjal M."/>
            <person name="Hansen N.F."/>
            <person name="Hayashizaki Y."/>
            <person name="Johnson-Hopson C."/>
            <person name="Hsuan V.W."/>
            <person name="Iida K."/>
            <person name="Karnes M."/>
            <person name="Khan S."/>
            <person name="Koesema E."/>
            <person name="Ishida J."/>
            <person name="Jiang P.X."/>
            <person name="Jones T."/>
            <person name="Kawai J."/>
            <person name="Kamiya A."/>
            <person name="Meyers C."/>
            <person name="Nakajima M."/>
            <person name="Narusaka M."/>
            <person name="Seki M."/>
            <person name="Sakurai T."/>
            <person name="Satou M."/>
            <person name="Tamse R."/>
            <person name="Vaysberg M."/>
            <person name="Wallender E.K."/>
            <person name="Wong C."/>
            <person name="Yamamura Y."/>
            <person name="Yuan S."/>
            <person name="Shinozaki K."/>
            <person name="Davis R.W."/>
            <person name="Theologis A."/>
            <person name="Ecker J.R."/>
        </authorList>
    </citation>
    <scope>NUCLEOTIDE SEQUENCE [LARGE SCALE MRNA]</scope>
    <source>
        <strain>cv. Columbia</strain>
    </source>
</reference>
<protein>
    <recommendedName>
        <fullName>Auxin transporter-like protein 3</fullName>
    </recommendedName>
    <alternativeName>
        <fullName>AUX1-like protein 3</fullName>
    </alternativeName>
</protein>
<feature type="chain" id="PRO_0000093844" description="Auxin transporter-like protein 3">
    <location>
        <begin position="1"/>
        <end position="470"/>
    </location>
</feature>
<feature type="topological domain" description="Cytoplasmic" evidence="2">
    <location>
        <begin position="1"/>
        <end position="57"/>
    </location>
</feature>
<feature type="transmembrane region" description="Helical" evidence="2">
    <location>
        <begin position="58"/>
        <end position="75"/>
    </location>
</feature>
<feature type="topological domain" description="Extracellular" evidence="2">
    <location>
        <begin position="76"/>
        <end position="77"/>
    </location>
</feature>
<feature type="transmembrane region" description="Helical" evidence="2">
    <location>
        <begin position="78"/>
        <end position="98"/>
    </location>
</feature>
<feature type="topological domain" description="Cytoplasmic" evidence="2">
    <location>
        <begin position="99"/>
        <end position="134"/>
    </location>
</feature>
<feature type="transmembrane region" description="Helical" evidence="2">
    <location>
        <begin position="135"/>
        <end position="155"/>
    </location>
</feature>
<feature type="topological domain" description="Extracellular" evidence="2">
    <location>
        <begin position="156"/>
        <end position="170"/>
    </location>
</feature>
<feature type="transmembrane region" description="Helical" evidence="2">
    <location>
        <begin position="171"/>
        <end position="191"/>
    </location>
</feature>
<feature type="topological domain" description="Cytoplasmic" evidence="2">
    <location>
        <position position="192"/>
    </location>
</feature>
<feature type="transmembrane region" description="Helical" evidence="2">
    <location>
        <begin position="193"/>
        <end position="213"/>
    </location>
</feature>
<feature type="topological domain" description="Extracellular" evidence="2">
    <location>
        <begin position="214"/>
        <end position="230"/>
    </location>
</feature>
<feature type="transmembrane region" description="Helical" evidence="2">
    <location>
        <begin position="231"/>
        <end position="251"/>
    </location>
</feature>
<feature type="topological domain" description="Cytoplasmic" evidence="2">
    <location>
        <begin position="252"/>
        <end position="264"/>
    </location>
</feature>
<feature type="transmembrane region" description="Helical" evidence="2">
    <location>
        <begin position="265"/>
        <end position="285"/>
    </location>
</feature>
<feature type="topological domain" description="Extracellular" evidence="2">
    <location>
        <begin position="286"/>
        <end position="312"/>
    </location>
</feature>
<feature type="transmembrane region" description="Helical" evidence="2">
    <location>
        <begin position="313"/>
        <end position="333"/>
    </location>
</feature>
<feature type="topological domain" description="Cytoplasmic" evidence="2">
    <location>
        <begin position="334"/>
        <end position="354"/>
    </location>
</feature>
<feature type="transmembrane region" description="Helical" evidence="2">
    <location>
        <begin position="355"/>
        <end position="375"/>
    </location>
</feature>
<feature type="topological domain" description="Extracellular" evidence="2">
    <location>
        <position position="376"/>
    </location>
</feature>
<feature type="transmembrane region" description="Helical" evidence="2">
    <location>
        <begin position="377"/>
        <end position="397"/>
    </location>
</feature>
<feature type="topological domain" description="Cytoplasmic" evidence="2">
    <location>
        <begin position="398"/>
        <end position="426"/>
    </location>
</feature>
<feature type="transmembrane region" description="Helical" evidence="2">
    <location>
        <begin position="427"/>
        <end position="447"/>
    </location>
</feature>
<feature type="topological domain" description="Extracellular" evidence="2">
    <location>
        <begin position="448"/>
        <end position="470"/>
    </location>
</feature>
<sequence length="470" mass="53305">MAAEKIETVVAGNYLEMEREEENISGNKKSSTKTKLSNFFWHGGSVYDAWFSCASNQVAQVLLTLPYSFSQLGMMSGILFQLFYGLMGSWTAYLISVLYVEYRTRKEREKFDFRNHVIQWFEVLDGLLGKHWRNLGLIFNCTFLLFGSVIQLIACASNIYYINDKLDKRTWTYIFGACCATTVFIPSFHNYRIWSFLGLAMTTYTSWYLTIASLLHGQAEDVKHSGPTTMVLYFTGATNILYTFGGHAVTVEIMHAMWKPQKFKAIYLLATIYVLTLTLPSASAVYWAFGDKLLTHSNALSLLPKTGFRDTAVILMLIHQFITFGFASTPLYFVWEKLIGVHETKSMFKRAMARLPVVVPIWFLAIIFPFFGPINSAVGSLLVSFTVYIIPALAHMLTFAPAPSRENAVERPPRVVGGWMGTYCINIFVVVWVFVVGFGFGGWASMVNFVRQIDTFGLFTKCYQCPPHKP</sequence>
<accession>Q9CA25</accession>
<organism>
    <name type="scientific">Arabidopsis thaliana</name>
    <name type="common">Mouse-ear cress</name>
    <dbReference type="NCBI Taxonomy" id="3702"/>
    <lineage>
        <taxon>Eukaryota</taxon>
        <taxon>Viridiplantae</taxon>
        <taxon>Streptophyta</taxon>
        <taxon>Embryophyta</taxon>
        <taxon>Tracheophyta</taxon>
        <taxon>Spermatophyta</taxon>
        <taxon>Magnoliopsida</taxon>
        <taxon>eudicotyledons</taxon>
        <taxon>Gunneridae</taxon>
        <taxon>Pentapetalae</taxon>
        <taxon>rosids</taxon>
        <taxon>malvids</taxon>
        <taxon>Brassicales</taxon>
        <taxon>Brassicaceae</taxon>
        <taxon>Camelineae</taxon>
        <taxon>Arabidopsis</taxon>
    </lineage>
</organism>
<name>LAX3_ARATH</name>
<evidence type="ECO:0000250" key="1"/>
<evidence type="ECO:0000255" key="2"/>
<evidence type="ECO:0000305" key="3"/>
<keyword id="KW-0029">Amino-acid transport</keyword>
<keyword id="KW-0927">Auxin signaling pathway</keyword>
<keyword id="KW-1003">Cell membrane</keyword>
<keyword id="KW-0472">Membrane</keyword>
<keyword id="KW-1185">Reference proteome</keyword>
<keyword id="KW-0769">Symport</keyword>
<keyword id="KW-0812">Transmembrane</keyword>
<keyword id="KW-1133">Transmembrane helix</keyword>
<keyword id="KW-0813">Transport</keyword>
<dbReference type="EMBL" id="AY127575">
    <property type="protein sequence ID" value="AAN02284.1"/>
    <property type="molecule type" value="Genomic_DNA"/>
</dbReference>
<dbReference type="EMBL" id="AC012193">
    <property type="protein sequence ID" value="AAG51630.1"/>
    <property type="molecule type" value="Genomic_DNA"/>
</dbReference>
<dbReference type="EMBL" id="CP002684">
    <property type="protein sequence ID" value="AEE36010.1"/>
    <property type="molecule type" value="Genomic_DNA"/>
</dbReference>
<dbReference type="EMBL" id="AY054266">
    <property type="protein sequence ID" value="AAL06925.1"/>
    <property type="molecule type" value="mRNA"/>
</dbReference>
<dbReference type="EMBL" id="BT008300">
    <property type="protein sequence ID" value="AAP37659.1"/>
    <property type="molecule type" value="mRNA"/>
</dbReference>
<dbReference type="PIR" id="F96806">
    <property type="entry name" value="F96806"/>
</dbReference>
<dbReference type="RefSeq" id="NP_177892.1">
    <property type="nucleotide sequence ID" value="NM_106418.4"/>
</dbReference>
<dbReference type="SMR" id="Q9CA25"/>
<dbReference type="BioGRID" id="29324">
    <property type="interactions" value="6"/>
</dbReference>
<dbReference type="FunCoup" id="Q9CA25">
    <property type="interactions" value="472"/>
</dbReference>
<dbReference type="IntAct" id="Q9CA25">
    <property type="interactions" value="3"/>
</dbReference>
<dbReference type="STRING" id="3702.Q9CA25"/>
<dbReference type="PaxDb" id="3702-AT1G77690.1"/>
<dbReference type="ProteomicsDB" id="238195"/>
<dbReference type="EnsemblPlants" id="AT1G77690.1">
    <property type="protein sequence ID" value="AT1G77690.1"/>
    <property type="gene ID" value="AT1G77690"/>
</dbReference>
<dbReference type="GeneID" id="844105"/>
<dbReference type="Gramene" id="AT1G77690.1">
    <property type="protein sequence ID" value="AT1G77690.1"/>
    <property type="gene ID" value="AT1G77690"/>
</dbReference>
<dbReference type="KEGG" id="ath:AT1G77690"/>
<dbReference type="Araport" id="AT1G77690"/>
<dbReference type="TAIR" id="AT1G77690">
    <property type="gene designation" value="LAX3"/>
</dbReference>
<dbReference type="eggNOG" id="KOG1303">
    <property type="taxonomic scope" value="Eukaryota"/>
</dbReference>
<dbReference type="HOGENOM" id="CLU_027994_2_0_1"/>
<dbReference type="InParanoid" id="Q9CA25"/>
<dbReference type="OMA" id="IRVHETK"/>
<dbReference type="PhylomeDB" id="Q9CA25"/>
<dbReference type="PRO" id="PR:Q9CA25"/>
<dbReference type="Proteomes" id="UP000006548">
    <property type="component" value="Chromosome 1"/>
</dbReference>
<dbReference type="ExpressionAtlas" id="Q9CA25">
    <property type="expression patterns" value="baseline and differential"/>
</dbReference>
<dbReference type="GO" id="GO:0005886">
    <property type="term" value="C:plasma membrane"/>
    <property type="evidence" value="ECO:0007669"/>
    <property type="project" value="UniProtKB-SubCell"/>
</dbReference>
<dbReference type="GO" id="GO:0010328">
    <property type="term" value="F:auxin influx transmembrane transporter activity"/>
    <property type="evidence" value="ECO:0000314"/>
    <property type="project" value="TAIR"/>
</dbReference>
<dbReference type="GO" id="GO:0015293">
    <property type="term" value="F:symporter activity"/>
    <property type="evidence" value="ECO:0007669"/>
    <property type="project" value="UniProtKB-KW"/>
</dbReference>
<dbReference type="GO" id="GO:0006865">
    <property type="term" value="P:amino acid transport"/>
    <property type="evidence" value="ECO:0007669"/>
    <property type="project" value="UniProtKB-KW"/>
</dbReference>
<dbReference type="GO" id="GO:0009926">
    <property type="term" value="P:auxin polar transport"/>
    <property type="evidence" value="ECO:0000314"/>
    <property type="project" value="TAIR"/>
</dbReference>
<dbReference type="GO" id="GO:0009734">
    <property type="term" value="P:auxin-activated signaling pathway"/>
    <property type="evidence" value="ECO:0007669"/>
    <property type="project" value="UniProtKB-KW"/>
</dbReference>
<dbReference type="GO" id="GO:0010311">
    <property type="term" value="P:lateral root formation"/>
    <property type="evidence" value="ECO:0000316"/>
    <property type="project" value="TAIR"/>
</dbReference>
<dbReference type="GO" id="GO:0009733">
    <property type="term" value="P:response to auxin"/>
    <property type="evidence" value="ECO:0000314"/>
    <property type="project" value="TAIR"/>
</dbReference>
<dbReference type="GO" id="GO:0048829">
    <property type="term" value="P:root cap development"/>
    <property type="evidence" value="ECO:0000316"/>
    <property type="project" value="TAIR"/>
</dbReference>
<dbReference type="InterPro" id="IPR013057">
    <property type="entry name" value="AA_transpt_TM"/>
</dbReference>
<dbReference type="PANTHER" id="PTHR48017">
    <property type="entry name" value="OS05G0424000 PROTEIN-RELATED"/>
    <property type="match status" value="1"/>
</dbReference>
<dbReference type="Pfam" id="PF01490">
    <property type="entry name" value="Aa_trans"/>
    <property type="match status" value="1"/>
</dbReference>
<comment type="function">
    <text evidence="1">Carrier protein involved in proton-driven auxin influx. Mediates the formation of auxin gradient from developing leaves (site of auxin biosynthesis) to tips by contributing to the loading of auxin in vascular tissues and facilitating acropetal (base to tip) auxin transport within inner tissues of the root apex, and basipetal (tip to base) auxin transport within outer tissues of the root apex (By similarity).</text>
</comment>
<comment type="subcellular location">
    <subcellularLocation>
        <location evidence="1">Cell membrane</location>
        <topology evidence="1">Multi-pass membrane protein</topology>
    </subcellularLocation>
</comment>
<comment type="similarity">
    <text evidence="3">Belongs to the amino acid/polyamine transporter 2 family. Amino acid/auxin permease (AAAP) (TC 2.A.18.1) subfamily.</text>
</comment>
<proteinExistence type="evidence at transcript level"/>